<organism>
    <name type="scientific">Babesia bovis</name>
    <dbReference type="NCBI Taxonomy" id="5865"/>
    <lineage>
        <taxon>Eukaryota</taxon>
        <taxon>Sar</taxon>
        <taxon>Alveolata</taxon>
        <taxon>Apicomplexa</taxon>
        <taxon>Aconoidasida</taxon>
        <taxon>Piroplasmida</taxon>
        <taxon>Babesiidae</taxon>
        <taxon>Babesia</taxon>
    </lineage>
</organism>
<protein>
    <recommendedName>
        <fullName evidence="1">Large ribosomal subunit protein uL29</fullName>
    </recommendedName>
    <alternativeName>
        <fullName>60S ribosomal protein L35</fullName>
    </alternativeName>
</protein>
<evidence type="ECO:0000305" key="1"/>
<name>RL35_BABBO</name>
<reference key="1">
    <citation type="journal article" date="1996" name="Mol. Biochem. Parasitol.">
        <title>Characterisation of genes encoding a nucleoside monophosphate kinase and a L35 ribosomal protein from Babesia bovis.</title>
        <authorList>
            <person name="Silins G.U."/>
            <person name="Blakeley R.L."/>
            <person name="Riddles P.W."/>
        </authorList>
    </citation>
    <scope>NUCLEOTIDE SEQUENCE [GENOMIC DNA / MRNA]</scope>
    <source>
        <strain>Samford</strain>
    </source>
</reference>
<accession>P52817</accession>
<sequence>MEKIKVYELRNKTDAELLKQLEDLKQEYASMRVQKVTVTSTSKLSQIGVIRKAIAKVLTVYNQRKREEARKQYTKISEMPLNMRPKLTRAKRRALTPKQLHLKTIKQRKKCENFPKRKYALLV</sequence>
<keyword id="KW-0687">Ribonucleoprotein</keyword>
<keyword id="KW-0689">Ribosomal protein</keyword>
<comment type="similarity">
    <text evidence="1">Belongs to the universal ribosomal protein uL29 family.</text>
</comment>
<proteinExistence type="evidence at transcript level"/>
<dbReference type="EMBL" id="U34076">
    <property type="protein sequence ID" value="AAC48308.1"/>
    <property type="molecule type" value="Genomic_DNA"/>
</dbReference>
<dbReference type="EMBL" id="U33844">
    <property type="protein sequence ID" value="AAC47013.1"/>
    <property type="molecule type" value="mRNA"/>
</dbReference>
<dbReference type="SMR" id="P52817"/>
<dbReference type="VEuPathDB" id="PiroplasmaDB:BBOV_IV008090"/>
<dbReference type="eggNOG" id="KOG3436">
    <property type="taxonomic scope" value="Eukaryota"/>
</dbReference>
<dbReference type="OMA" id="VMNQKAR"/>
<dbReference type="GO" id="GO:0022625">
    <property type="term" value="C:cytosolic large ribosomal subunit"/>
    <property type="evidence" value="ECO:0007669"/>
    <property type="project" value="InterPro"/>
</dbReference>
<dbReference type="GO" id="GO:0003729">
    <property type="term" value="F:mRNA binding"/>
    <property type="evidence" value="ECO:0007669"/>
    <property type="project" value="TreeGrafter"/>
</dbReference>
<dbReference type="GO" id="GO:0003735">
    <property type="term" value="F:structural constituent of ribosome"/>
    <property type="evidence" value="ECO:0007669"/>
    <property type="project" value="InterPro"/>
</dbReference>
<dbReference type="GO" id="GO:0000463">
    <property type="term" value="P:maturation of LSU-rRNA from tricistronic rRNA transcript (SSU-rRNA, 5.8S rRNA, LSU-rRNA)"/>
    <property type="evidence" value="ECO:0007669"/>
    <property type="project" value="InterPro"/>
</dbReference>
<dbReference type="GO" id="GO:0006412">
    <property type="term" value="P:translation"/>
    <property type="evidence" value="ECO:0007669"/>
    <property type="project" value="InterPro"/>
</dbReference>
<dbReference type="CDD" id="cd00427">
    <property type="entry name" value="Ribosomal_L29_HIP"/>
    <property type="match status" value="1"/>
</dbReference>
<dbReference type="FunFam" id="1.10.287.310:FF:000002">
    <property type="entry name" value="60S ribosomal protein L35"/>
    <property type="match status" value="1"/>
</dbReference>
<dbReference type="FunFam" id="6.10.250.3450:FF:000001">
    <property type="entry name" value="60S ribosomal protein L35"/>
    <property type="match status" value="1"/>
</dbReference>
<dbReference type="Gene3D" id="1.10.287.310">
    <property type="match status" value="1"/>
</dbReference>
<dbReference type="Gene3D" id="6.10.250.3450">
    <property type="match status" value="1"/>
</dbReference>
<dbReference type="HAMAP" id="MF_00374">
    <property type="entry name" value="Ribosomal_uL29"/>
    <property type="match status" value="1"/>
</dbReference>
<dbReference type="InterPro" id="IPR001854">
    <property type="entry name" value="Ribosomal_uL29"/>
</dbReference>
<dbReference type="InterPro" id="IPR018254">
    <property type="entry name" value="Ribosomal_uL29_CS"/>
</dbReference>
<dbReference type="InterPro" id="IPR045059">
    <property type="entry name" value="Ribosomal_uL29_euk"/>
</dbReference>
<dbReference type="InterPro" id="IPR036049">
    <property type="entry name" value="Ribosomal_uL29_sf"/>
</dbReference>
<dbReference type="NCBIfam" id="TIGR00012">
    <property type="entry name" value="L29"/>
    <property type="match status" value="1"/>
</dbReference>
<dbReference type="PANTHER" id="PTHR45722">
    <property type="entry name" value="60S RIBOSOMAL PROTEIN L35"/>
    <property type="match status" value="1"/>
</dbReference>
<dbReference type="PANTHER" id="PTHR45722:SF2">
    <property type="entry name" value="LARGE RIBOSOMAL SUBUNIT PROTEIN UL29-RELATED"/>
    <property type="match status" value="1"/>
</dbReference>
<dbReference type="Pfam" id="PF00831">
    <property type="entry name" value="Ribosomal_L29"/>
    <property type="match status" value="1"/>
</dbReference>
<dbReference type="SUPFAM" id="SSF46561">
    <property type="entry name" value="Ribosomal protein L29 (L29p)"/>
    <property type="match status" value="1"/>
</dbReference>
<dbReference type="PROSITE" id="PS00579">
    <property type="entry name" value="RIBOSOMAL_L29"/>
    <property type="match status" value="1"/>
</dbReference>
<gene>
    <name type="primary">RPL35</name>
</gene>
<feature type="chain" id="PRO_0000130543" description="Large ribosomal subunit protein uL29">
    <location>
        <begin position="1"/>
        <end position="123"/>
    </location>
</feature>